<sequence>MSAKKSTAQRLGRVLETVTRQSGRLPETPAYGSWLLGRVSESQRRRRVRIQVMLTALVVTANLLGIGVALLLVTIAIPEPSIVRDTPRWLTFGVVPGYVLLALALGSYALTRQTVQALRWAIEGRKPTREEERRTFLAPWRVAVGHLMFWGVGTALLTTLYGLINNAFIPRFLFAVSFCGVLVATATYLHTEFALRPFAAQALEAGPPPRRLAPGILGRTMVVWLLGSGVPVVGIALMAMFEMVLLNLTRMQFATGVLIISMVTLVFGFILMWILAWLTATPVRVVRAALRRVERGELRTNLVVFDGTELGELQRGFNAMVAGLRERERVRDLFGRHVGREVAAAAERERSKLGGEERHVAVVFIDIVGSTQLVTSRPPADVVKLLNKFFAIVVDEVDRHHGLVNKFEGDASLTIFGAPNRLPCPEDKALAAARAIADRLVNEMPECQAGIGVAAGQVIAGNVGARERFEYTVIGEPVNEAARLCELAKSRPGKLLASAQAVDAASEEERARWSLGRHVKLRGHDQPVRLAKPVGLTKPRR</sequence>
<comment type="subcellular location">
    <subcellularLocation>
        <location evidence="4">Cell membrane</location>
        <topology evidence="4">Multi-pass membrane protein</topology>
    </subcellularLocation>
</comment>
<comment type="similarity">
    <text evidence="4">Belongs to the adenylyl cyclase class-3 family.</text>
</comment>
<keyword id="KW-1003">Cell membrane</keyword>
<keyword id="KW-0472">Membrane</keyword>
<keyword id="KW-1185">Reference proteome</keyword>
<keyword id="KW-0812">Transmembrane</keyword>
<keyword id="KW-1133">Transmembrane helix</keyword>
<proteinExistence type="inferred from homology"/>
<gene>
    <name type="ordered locus">MT1359</name>
</gene>
<reference key="1">
    <citation type="journal article" date="2002" name="J. Bacteriol.">
        <title>Whole-genome comparison of Mycobacterium tuberculosis clinical and laboratory strains.</title>
        <authorList>
            <person name="Fleischmann R.D."/>
            <person name="Alland D."/>
            <person name="Eisen J.A."/>
            <person name="Carpenter L."/>
            <person name="White O."/>
            <person name="Peterson J.D."/>
            <person name="DeBoy R.T."/>
            <person name="Dodson R.J."/>
            <person name="Gwinn M.L."/>
            <person name="Haft D.H."/>
            <person name="Hickey E.K."/>
            <person name="Kolonay J.F."/>
            <person name="Nelson W.C."/>
            <person name="Umayam L.A."/>
            <person name="Ermolaeva M.D."/>
            <person name="Salzberg S.L."/>
            <person name="Delcher A."/>
            <person name="Utterback T.R."/>
            <person name="Weidman J.F."/>
            <person name="Khouri H.M."/>
            <person name="Gill J."/>
            <person name="Mikula A."/>
            <person name="Bishai W."/>
            <person name="Jacobs W.R. Jr."/>
            <person name="Venter J.C."/>
            <person name="Fraser C.M."/>
        </authorList>
    </citation>
    <scope>NUCLEOTIDE SEQUENCE [LARGE SCALE GENOMIC DNA]</scope>
    <source>
        <strain>CDC 1551 / Oshkosh</strain>
    </source>
</reference>
<feature type="chain" id="PRO_0000426846" description="Uncharacterized protein MT1359">
    <location>
        <begin position="1"/>
        <end position="541"/>
    </location>
</feature>
<feature type="transmembrane region" description="Helical" evidence="1">
    <location>
        <begin position="57"/>
        <end position="77"/>
    </location>
</feature>
<feature type="transmembrane region" description="Helical" evidence="1">
    <location>
        <begin position="90"/>
        <end position="110"/>
    </location>
</feature>
<feature type="transmembrane region" description="Helical" evidence="1">
    <location>
        <begin position="144"/>
        <end position="164"/>
    </location>
</feature>
<feature type="transmembrane region" description="Helical" evidence="1">
    <location>
        <begin position="167"/>
        <end position="187"/>
    </location>
</feature>
<feature type="transmembrane region" description="Helical" evidence="1">
    <location>
        <begin position="221"/>
        <end position="241"/>
    </location>
</feature>
<feature type="transmembrane region" description="Helical" evidence="1">
    <location>
        <begin position="257"/>
        <end position="277"/>
    </location>
</feature>
<feature type="domain" description="HAMP" evidence="3">
    <location>
        <begin position="278"/>
        <end position="329"/>
    </location>
</feature>
<feature type="domain" description="Guanylate cyclase" evidence="2">
    <location>
        <begin position="361"/>
        <end position="485"/>
    </location>
</feature>
<accession>P9WQ32</accession>
<accession>L0T7X3</accession>
<accession>P63527</accession>
<accession>Q10631</accession>
<name>Y1318_MYCTO</name>
<evidence type="ECO:0000255" key="1"/>
<evidence type="ECO:0000255" key="2">
    <source>
        <dbReference type="PROSITE-ProRule" id="PRU00099"/>
    </source>
</evidence>
<evidence type="ECO:0000255" key="3">
    <source>
        <dbReference type="PROSITE-ProRule" id="PRU00102"/>
    </source>
</evidence>
<evidence type="ECO:0000305" key="4"/>
<dbReference type="EMBL" id="AE000516">
    <property type="protein sequence ID" value="AAK45621.1"/>
    <property type="molecule type" value="Genomic_DNA"/>
</dbReference>
<dbReference type="PIR" id="B70769">
    <property type="entry name" value="B70769"/>
</dbReference>
<dbReference type="RefSeq" id="WP_003406864.1">
    <property type="nucleotide sequence ID" value="NZ_KK341227.1"/>
</dbReference>
<dbReference type="SMR" id="P9WQ32"/>
<dbReference type="KEGG" id="mtc:MT1359"/>
<dbReference type="PATRIC" id="fig|83331.31.peg.1465"/>
<dbReference type="HOGENOM" id="CLU_025433_2_1_11"/>
<dbReference type="Proteomes" id="UP000001020">
    <property type="component" value="Chromosome"/>
</dbReference>
<dbReference type="GO" id="GO:0005886">
    <property type="term" value="C:plasma membrane"/>
    <property type="evidence" value="ECO:0007669"/>
    <property type="project" value="UniProtKB-SubCell"/>
</dbReference>
<dbReference type="GO" id="GO:0004016">
    <property type="term" value="F:adenylate cyclase activity"/>
    <property type="evidence" value="ECO:0007669"/>
    <property type="project" value="UniProtKB-ARBA"/>
</dbReference>
<dbReference type="GO" id="GO:0006171">
    <property type="term" value="P:cAMP biosynthetic process"/>
    <property type="evidence" value="ECO:0007669"/>
    <property type="project" value="TreeGrafter"/>
</dbReference>
<dbReference type="GO" id="GO:0035556">
    <property type="term" value="P:intracellular signal transduction"/>
    <property type="evidence" value="ECO:0007669"/>
    <property type="project" value="InterPro"/>
</dbReference>
<dbReference type="CDD" id="cd07302">
    <property type="entry name" value="CHD"/>
    <property type="match status" value="1"/>
</dbReference>
<dbReference type="CDD" id="cd06225">
    <property type="entry name" value="HAMP"/>
    <property type="match status" value="1"/>
</dbReference>
<dbReference type="FunFam" id="3.30.70.1230:FF:000016">
    <property type="entry name" value="Adenylate/guanylate cyclase domain-containing protein"/>
    <property type="match status" value="1"/>
</dbReference>
<dbReference type="Gene3D" id="6.10.340.10">
    <property type="match status" value="1"/>
</dbReference>
<dbReference type="Gene3D" id="3.30.70.1230">
    <property type="entry name" value="Nucleotide cyclase"/>
    <property type="match status" value="1"/>
</dbReference>
<dbReference type="InterPro" id="IPR001054">
    <property type="entry name" value="A/G_cyclase"/>
</dbReference>
<dbReference type="InterPro" id="IPR050697">
    <property type="entry name" value="Adenylyl/Guanylyl_Cyclase_3/4"/>
</dbReference>
<dbReference type="InterPro" id="IPR003660">
    <property type="entry name" value="HAMP_dom"/>
</dbReference>
<dbReference type="InterPro" id="IPR029787">
    <property type="entry name" value="Nucleotide_cyclase"/>
</dbReference>
<dbReference type="PANTHER" id="PTHR43081">
    <property type="entry name" value="ADENYLATE CYCLASE, TERMINAL-DIFFERENTIATION SPECIFIC-RELATED"/>
    <property type="match status" value="1"/>
</dbReference>
<dbReference type="PANTHER" id="PTHR43081:SF17">
    <property type="entry name" value="BLL5647 PROTEIN"/>
    <property type="match status" value="1"/>
</dbReference>
<dbReference type="Pfam" id="PF00211">
    <property type="entry name" value="Guanylate_cyc"/>
    <property type="match status" value="1"/>
</dbReference>
<dbReference type="Pfam" id="PF00672">
    <property type="entry name" value="HAMP"/>
    <property type="match status" value="1"/>
</dbReference>
<dbReference type="SMART" id="SM00044">
    <property type="entry name" value="CYCc"/>
    <property type="match status" value="1"/>
</dbReference>
<dbReference type="SMART" id="SM00304">
    <property type="entry name" value="HAMP"/>
    <property type="match status" value="1"/>
</dbReference>
<dbReference type="SUPFAM" id="SSF158472">
    <property type="entry name" value="HAMP domain-like"/>
    <property type="match status" value="1"/>
</dbReference>
<dbReference type="SUPFAM" id="SSF55073">
    <property type="entry name" value="Nucleotide cyclase"/>
    <property type="match status" value="1"/>
</dbReference>
<dbReference type="PROSITE" id="PS50125">
    <property type="entry name" value="GUANYLATE_CYCLASE_2"/>
    <property type="match status" value="1"/>
</dbReference>
<dbReference type="PROSITE" id="PS50885">
    <property type="entry name" value="HAMP"/>
    <property type="match status" value="1"/>
</dbReference>
<protein>
    <recommendedName>
        <fullName>Uncharacterized protein MT1359</fullName>
    </recommendedName>
</protein>
<organism>
    <name type="scientific">Mycobacterium tuberculosis (strain CDC 1551 / Oshkosh)</name>
    <dbReference type="NCBI Taxonomy" id="83331"/>
    <lineage>
        <taxon>Bacteria</taxon>
        <taxon>Bacillati</taxon>
        <taxon>Actinomycetota</taxon>
        <taxon>Actinomycetes</taxon>
        <taxon>Mycobacteriales</taxon>
        <taxon>Mycobacteriaceae</taxon>
        <taxon>Mycobacterium</taxon>
        <taxon>Mycobacterium tuberculosis complex</taxon>
    </lineage>
</organism>